<organism>
    <name type="scientific">Escherichia coli (strain K12)</name>
    <dbReference type="NCBI Taxonomy" id="83333"/>
    <lineage>
        <taxon>Bacteria</taxon>
        <taxon>Pseudomonadati</taxon>
        <taxon>Pseudomonadota</taxon>
        <taxon>Gammaproteobacteria</taxon>
        <taxon>Enterobacterales</taxon>
        <taxon>Enterobacteriaceae</taxon>
        <taxon>Escherichia</taxon>
    </lineage>
</organism>
<gene>
    <name evidence="17" type="primary">tolA</name>
    <name type="synonym">cim</name>
    <name type="synonym">excC</name>
    <name type="synonym">lky</name>
    <name type="ordered locus">b0739</name>
    <name type="ordered locus">JW0729</name>
</gene>
<name>TOLA_ECOLI</name>
<proteinExistence type="evidence at protein level"/>
<comment type="function">
    <text evidence="4 6 8 9 11 13 15 19">Part of the Tol-Pal system, which plays a role in outer membrane invagination during cell division and is important for maintaining outer membrane integrity (PubMed:11115123, PubMed:11994151, PubMed:1683466, PubMed:17233825, PubMed:8416897). The Tol-Pal system is also required for polar localization of chemoreceptors clusters (PubMed:24720726). The system also appears to be required for the activity of several outer membrane-localized enzymes with cell wall remodeling activity (PubMed:32152098). Is involved in the uptake of group A colicins (colicins A, E1, E2, E3, and K) and in the uptake of filamentous phage DNA (PubMed:1683466).</text>
</comment>
<comment type="subunit">
    <text evidence="3 4 5 6 14 16 20">The Tol-Pal system is composed of five core proteins: the inner membrane proteins TolA, TolQ and TolR, the periplasmic protein TolB and the outer membrane protein Pal. They form a network linking the inner and outer membranes and the peptidoglycan layer (PubMed:17233825). TolA interacts with TolQ and TolR via its N-terminal domain (PubMed:10419942, PubMed:7744737). Interacts with CpoB, and with the trimeric porins OmpC, OmpF, PhoE and LamB via its central domain (PubMed:11994151, PubMed:8978668). Interacts with TolB via its C-terminal domain (PubMed:11994151). Also interacts with Pal via its C-terminal domain. This interaction is proton motive force dependent and requires TolQ and TolR (PubMed:11115123, PubMed:11722743).</text>
</comment>
<comment type="interaction">
    <interactant intactId="EBI-1120026">
        <id>P19934</id>
    </interactant>
    <interactant intactId="EBI-7180728">
        <id>P0A855</id>
        <label>tolB</label>
    </interactant>
    <organismsDiffer>false</organismsDiffer>
    <experiments>5</experiments>
</comment>
<comment type="interaction">
    <interactant intactId="EBI-1120026">
        <id>P19934</id>
    </interactant>
    <interactant intactId="EBI-6559916">
        <id>P04480</id>
        <label>caa</label>
    </interactant>
    <organismsDiffer>true</organismsDiffer>
    <experiments>6</experiments>
</comment>
<comment type="subcellular location">
    <subcellularLocation>
        <location evidence="10 12">Cell inner membrane</location>
        <topology evidence="12">Single-pass membrane protein</topology>
    </subcellularLocation>
    <text evidence="9">Accumulates at cell constriction sites. Recruitment to the division site is dependent on FtsN activity.</text>
</comment>
<comment type="domain">
    <text evidence="4 6 7 10">Contains an N-terminal domain that anchors the protein to the inner membrane, a central domain (domain II), and a C-terminal domain (domain III), which is the functional portion of the protein (PubMed:2068069). The C-terminal domain is involved in interaction with TolB and Pal, and is also involved in direct interaction with colicins and phages. It adapts its conformation upon binding to various partners (PubMed:11115123, PubMed:11994151, PubMed:15701516).</text>
</comment>
<comment type="disruption phenotype">
    <text evidence="9 13">Mutants lacking the tol-pal cluster suffer delayed outer membrane invagination and contain large outer membrane blebs at constriction sites and cell poles (PubMed:17233825). Tol-pal mutants fail to complete division and form cell chains, and fail to process denuded peptidoglycans at the septum (PubMed:32152098).</text>
</comment>
<comment type="similarity">
    <text evidence="18">Belongs to the TolA family.</text>
</comment>
<reference key="1">
    <citation type="journal article" date="1989" name="J. Bacteriol.">
        <title>Nucleotide sequences of the tolA and tolB genes and localization of their products, components of a multistep translocation system in Escherichia coli.</title>
        <authorList>
            <person name="Levengood S.K."/>
            <person name="Webster R.E."/>
        </authorList>
    </citation>
    <scope>NUCLEOTIDE SEQUENCE [GENOMIC DNA]</scope>
    <scope>SUBCELLULAR LOCATION</scope>
    <scope>TOPOLOGY</scope>
    <source>
        <strain>K12 / JM105 / ATCC 47016</strain>
    </source>
</reference>
<reference key="2">
    <citation type="journal article" date="1996" name="DNA Res.">
        <title>A 718-kb DNA sequence of the Escherichia coli K-12 genome corresponding to the 12.7-28.0 min region on the linkage map.</title>
        <authorList>
            <person name="Oshima T."/>
            <person name="Aiba H."/>
            <person name="Baba T."/>
            <person name="Fujita K."/>
            <person name="Hayashi K."/>
            <person name="Honjo A."/>
            <person name="Ikemoto K."/>
            <person name="Inada T."/>
            <person name="Itoh T."/>
            <person name="Kajihara M."/>
            <person name="Kanai K."/>
            <person name="Kashimoto K."/>
            <person name="Kimura S."/>
            <person name="Kitagawa M."/>
            <person name="Makino K."/>
            <person name="Masuda S."/>
            <person name="Miki T."/>
            <person name="Mizobuchi K."/>
            <person name="Mori H."/>
            <person name="Motomura K."/>
            <person name="Nakamura Y."/>
            <person name="Nashimoto H."/>
            <person name="Nishio Y."/>
            <person name="Saito N."/>
            <person name="Sampei G."/>
            <person name="Seki Y."/>
            <person name="Tagami H."/>
            <person name="Takemoto K."/>
            <person name="Wada C."/>
            <person name="Yamamoto Y."/>
            <person name="Yano M."/>
            <person name="Horiuchi T."/>
        </authorList>
    </citation>
    <scope>NUCLEOTIDE SEQUENCE [LARGE SCALE GENOMIC DNA]</scope>
    <source>
        <strain>K12 / W3110 / ATCC 27325 / DSM 5911</strain>
    </source>
</reference>
<reference key="3">
    <citation type="journal article" date="1997" name="Science">
        <title>The complete genome sequence of Escherichia coli K-12.</title>
        <authorList>
            <person name="Blattner F.R."/>
            <person name="Plunkett G. III"/>
            <person name="Bloch C.A."/>
            <person name="Perna N.T."/>
            <person name="Burland V."/>
            <person name="Riley M."/>
            <person name="Collado-Vides J."/>
            <person name="Glasner J.D."/>
            <person name="Rode C.K."/>
            <person name="Mayhew G.F."/>
            <person name="Gregor J."/>
            <person name="Davis N.W."/>
            <person name="Kirkpatrick H.A."/>
            <person name="Goeden M.A."/>
            <person name="Rose D.J."/>
            <person name="Mau B."/>
            <person name="Shao Y."/>
        </authorList>
    </citation>
    <scope>NUCLEOTIDE SEQUENCE [LARGE SCALE GENOMIC DNA]</scope>
    <source>
        <strain>K12 / MG1655 / ATCC 47076</strain>
    </source>
</reference>
<reference key="4">
    <citation type="journal article" date="2006" name="Mol. Syst. Biol.">
        <title>Highly accurate genome sequences of Escherichia coli K-12 strains MG1655 and W3110.</title>
        <authorList>
            <person name="Hayashi K."/>
            <person name="Morooka N."/>
            <person name="Yamamoto Y."/>
            <person name="Fujita K."/>
            <person name="Isono K."/>
            <person name="Choi S."/>
            <person name="Ohtsubo E."/>
            <person name="Baba T."/>
            <person name="Wanner B.L."/>
            <person name="Mori H."/>
            <person name="Horiuchi T."/>
        </authorList>
    </citation>
    <scope>NUCLEOTIDE SEQUENCE [LARGE SCALE GENOMIC DNA]</scope>
    <source>
        <strain>K12 / W3110 / ATCC 27325 / DSM 5911</strain>
    </source>
</reference>
<reference key="5">
    <citation type="journal article" date="1991" name="Mol. Microbiol.">
        <title>The tol gene products and the import of macromolecules into Escherichia coli.</title>
        <authorList>
            <person name="Webster R.E."/>
        </authorList>
    </citation>
    <scope>FUNCTION</scope>
</reference>
<reference key="6">
    <citation type="journal article" date="1991" name="Proc. Natl. Acad. Sci. U.S.A.">
        <title>TolA: a membrane protein involved in colicin uptake contains an extended helical region.</title>
        <authorList>
            <person name="Levengood S.K."/>
            <person name="Beyer W.F. Jr."/>
            <person name="Webster R.E."/>
        </authorList>
    </citation>
    <scope>SUBCELLULAR LOCATION</scope>
    <scope>DOMAINS</scope>
</reference>
<reference key="7">
    <citation type="journal article" date="1993" name="J. Bacteriol.">
        <title>Role of the carboxyl-terminal domain of TolA in protein import and integrity of the outer membrane.</title>
        <authorList>
            <person name="Levengood-Freyermuth S.K."/>
            <person name="Click E.M."/>
            <person name="Webster R.E."/>
        </authorList>
    </citation>
    <scope>FUNCTION</scope>
</reference>
<reference key="8">
    <citation type="journal article" date="1995" name="J. Biol. Chem.">
        <title>Protein complex within Escherichia coli inner membrane. TolA N-terminal domain interacts with TolQ and TolR proteins.</title>
        <authorList>
            <person name="Derouiche R."/>
            <person name="Benedetti H."/>
            <person name="Lazzaroni J.C."/>
            <person name="Lazdunski C."/>
            <person name="Lloubes R."/>
        </authorList>
    </citation>
    <scope>INTERACTION WITH TOLQ AND TOLR</scope>
</reference>
<reference key="9">
    <citation type="journal article" date="1996" name="EMBO J.">
        <title>TolA central domain interacts with Escherichia coli porins.</title>
        <authorList>
            <person name="Derouiche R."/>
            <person name="Gavioli M."/>
            <person name="Benedetti H."/>
            <person name="Prilipov A."/>
            <person name="Lazdunski C."/>
            <person name="Lloubes R."/>
        </authorList>
    </citation>
    <scope>INTERACTION WITH PORINS</scope>
</reference>
<reference key="10">
    <citation type="journal article" date="1999" name="J. Bacteriol.">
        <title>Role of TolR N-terminal, central, and C-terminal domains in dimerization and interaction with TolA and tolQ.</title>
        <authorList>
            <person name="Journet L."/>
            <person name="Rigal A."/>
            <person name="Lazdunski C."/>
            <person name="Benedetti H."/>
        </authorList>
    </citation>
    <scope>INTERACTION WITH TOLR</scope>
    <source>
        <strain>K12 / W3110 / ATCC 27325 / DSM 5911</strain>
    </source>
</reference>
<reference key="11">
    <citation type="journal article" date="2000" name="Mol. Microbiol.">
        <title>Proton motive force drives the interaction of the inner membrane TolA and outer membrane pal proteins in Escherichia coli.</title>
        <authorList>
            <person name="Cascales E."/>
            <person name="Gavioli M."/>
            <person name="Sturgis J.N."/>
            <person name="Lloubes R."/>
        </authorList>
    </citation>
    <scope>FUNCTION</scope>
    <scope>INTERACTION WITH PAL</scope>
    <scope>DOMAIN</scope>
</reference>
<reference key="12">
    <citation type="journal article" date="2001" name="Mol. Microbiol.">
        <title>The TolQ-TolR proteins energize TolA and share homologies with the flagellar motor proteins MotA-MotB.</title>
        <authorList>
            <person name="Cascales E."/>
            <person name="Lloubes R."/>
            <person name="Sturgis J.N."/>
        </authorList>
    </citation>
    <scope>INTERACTION WITH PAL</scope>
</reference>
<reference key="13">
    <citation type="journal article" date="2002" name="Mol. Microbiol.">
        <title>The Tol/Pal system function requires an interaction between the C-terminal domain of TolA and the N-terminal domain of TolB.</title>
        <authorList>
            <person name="Walburger A."/>
            <person name="Lazdunski C."/>
            <person name="Corda Y."/>
        </authorList>
    </citation>
    <scope>FUNCTION</scope>
    <scope>INTERACTION WITH TOLB AND CPOB</scope>
    <scope>DOMAIN</scope>
</reference>
<reference key="14">
    <citation type="journal article" date="2007" name="Mol. Microbiol.">
        <title>The trans-envelope Tol-Pal complex is part of the cell division machinery and required for proper outer-membrane invagination during cell constriction in E. coli.</title>
        <authorList>
            <person name="Gerding M.A."/>
            <person name="Ogata Y."/>
            <person name="Pecora N.D."/>
            <person name="Niki H."/>
            <person name="de Boer P.A."/>
        </authorList>
    </citation>
    <scope>FUNCTION</scope>
    <scope>SUBUNIT</scope>
    <scope>SUBCELLULAR LOCATION</scope>
    <scope>DISRUPTION PHENOTYPE</scope>
    <source>
        <strain>K12 / MG1655 / ATCC 47076</strain>
    </source>
</reference>
<reference key="15">
    <citation type="journal article" date="2014" name="Mol. Microbiol.">
        <title>Polar localization of Escherichia coli chemoreceptors requires an intact Tol-Pal complex.</title>
        <authorList>
            <person name="Santos T.M."/>
            <person name="Lin T.Y."/>
            <person name="Rajendran M."/>
            <person name="Anderson S.M."/>
            <person name="Weibel D.B."/>
        </authorList>
    </citation>
    <scope>FUNCTION</scope>
</reference>
<reference key="16">
    <citation type="journal article" date="2020" name="Proc. Natl. Acad. Sci. U.S.A.">
        <title>The Tol-Pal system is required for peptidoglycan-cleaving enzymes to complete bacterial cell division.</title>
        <authorList>
            <person name="Yakhnina A.A."/>
            <person name="Bernhardt T.G."/>
        </authorList>
    </citation>
    <scope>FUNCTION</scope>
    <scope>DISRUPTION PHENOTYPE</scope>
</reference>
<reference evidence="23" key="17">
    <citation type="journal article" date="1999" name="Structure">
        <title>Filamentous phage infection: crystal structure of g3p in complex with its coreceptor, the C-terminal domain of TolA.</title>
        <authorList>
            <person name="Lubkowski J."/>
            <person name="Hennecke F."/>
            <person name="Plueckthun A."/>
            <person name="Wlodawer A."/>
        </authorList>
    </citation>
    <scope>X-RAY CRYSTALLOGRAPHY (1.85 ANGSTROMS) OF 294-421</scope>
</reference>
<reference evidence="22" key="18">
    <citation type="journal article" date="2005" name="J. Mol. Biol.">
        <title>Solution structure of the E.coli TolA C-terminal domain reveals conformational changes upon binding to the phage g3p N-terminal domain.</title>
        <authorList>
            <person name="Deprez C."/>
            <person name="Lloubes R."/>
            <person name="Gavioli M."/>
            <person name="Marion D."/>
            <person name="Guerlesquin F."/>
            <person name="Blanchard L."/>
        </authorList>
    </citation>
    <scope>STRUCTURE BY NMR OF 325-421</scope>
    <scope>DOMAIN</scope>
</reference>
<feature type="chain" id="PRO_0000072622" description="Tol-Pal system protein TolA">
    <location>
        <begin position="1"/>
        <end position="421"/>
    </location>
</feature>
<feature type="topological domain" description="Cytoplasmic" evidence="21">
    <location>
        <begin position="1"/>
        <end position="13"/>
    </location>
</feature>
<feature type="transmembrane region" description="Helical" evidence="1">
    <location>
        <begin position="14"/>
        <end position="34"/>
    </location>
</feature>
<feature type="topological domain" description="Periplasmic" evidence="12">
    <location>
        <begin position="35"/>
        <end position="421"/>
    </location>
</feature>
<feature type="repeat" description="1">
    <location>
        <begin position="224"/>
        <end position="229"/>
    </location>
</feature>
<feature type="repeat" description="2">
    <location>
        <begin position="230"/>
        <end position="234"/>
    </location>
</feature>
<feature type="repeat" description="3">
    <location>
        <begin position="235"/>
        <end position="240"/>
    </location>
</feature>
<feature type="repeat" description="4">
    <location>
        <begin position="241"/>
        <end position="245"/>
    </location>
</feature>
<feature type="repeat" description="5">
    <location>
        <begin position="246"/>
        <end position="250"/>
    </location>
</feature>
<feature type="repeat" description="6">
    <location>
        <begin position="251"/>
        <end position="255"/>
    </location>
</feature>
<feature type="repeat" description="7">
    <location>
        <begin position="256"/>
        <end position="260"/>
    </location>
</feature>
<feature type="repeat" description="8">
    <location>
        <begin position="261"/>
        <end position="266"/>
    </location>
</feature>
<feature type="repeat" description="9">
    <location>
        <begin position="267"/>
        <end position="271"/>
    </location>
</feature>
<feature type="repeat" description="10">
    <location>
        <begin position="272"/>
        <end position="277"/>
    </location>
</feature>
<feature type="repeat" description="11">
    <location>
        <begin position="278"/>
        <end position="282"/>
    </location>
</feature>
<feature type="repeat" description="12">
    <location>
        <begin position="283"/>
        <end position="287"/>
    </location>
</feature>
<feature type="repeat" description="13">
    <location>
        <begin position="288"/>
        <end position="292"/>
    </location>
</feature>
<feature type="region of interest" description="Domain II (alpha-helical)">
    <location>
        <begin position="48"/>
        <end position="310"/>
    </location>
</feature>
<feature type="region of interest" description="Disordered" evidence="2">
    <location>
        <begin position="65"/>
        <end position="266"/>
    </location>
</feature>
<feature type="region of interest" description="13 X tandem repeats of [EDA]-K(1,2)-A(2,4)">
    <location>
        <begin position="224"/>
        <end position="292"/>
    </location>
</feature>
<feature type="region of interest" description="Disordered" evidence="2">
    <location>
        <begin position="300"/>
        <end position="336"/>
    </location>
</feature>
<feature type="region of interest" description="Domain III (functional)">
    <location>
        <begin position="311"/>
        <end position="421"/>
    </location>
</feature>
<feature type="compositionally biased region" description="Basic and acidic residues" evidence="2">
    <location>
        <begin position="73"/>
        <end position="175"/>
    </location>
</feature>
<feature type="compositionally biased region" description="Basic and acidic residues" evidence="2">
    <location>
        <begin position="206"/>
        <end position="266"/>
    </location>
</feature>
<feature type="compositionally biased region" description="Polar residues" evidence="2">
    <location>
        <begin position="317"/>
        <end position="332"/>
    </location>
</feature>
<feature type="disulfide bond" evidence="22 24 25">
    <location>
        <begin position="363"/>
        <end position="388"/>
    </location>
</feature>
<feature type="strand" evidence="26">
    <location>
        <begin position="327"/>
        <end position="329"/>
    </location>
</feature>
<feature type="strand" evidence="26">
    <location>
        <begin position="331"/>
        <end position="334"/>
    </location>
</feature>
<feature type="helix" evidence="27">
    <location>
        <begin position="335"/>
        <end position="349"/>
    </location>
</feature>
<feature type="turn" evidence="26">
    <location>
        <begin position="350"/>
        <end position="352"/>
    </location>
</feature>
<feature type="helix" evidence="27">
    <location>
        <begin position="355"/>
        <end position="358"/>
    </location>
</feature>
<feature type="strand" evidence="27">
    <location>
        <begin position="363"/>
        <end position="369"/>
    </location>
</feature>
<feature type="turn" evidence="26">
    <location>
        <begin position="371"/>
        <end position="373"/>
    </location>
</feature>
<feature type="strand" evidence="27">
    <location>
        <begin position="375"/>
        <end position="383"/>
    </location>
</feature>
<feature type="helix" evidence="27">
    <location>
        <begin position="385"/>
        <end position="397"/>
    </location>
</feature>
<feature type="helix" evidence="27">
    <location>
        <begin position="406"/>
        <end position="412"/>
    </location>
</feature>
<feature type="strand" evidence="27">
    <location>
        <begin position="416"/>
        <end position="420"/>
    </location>
</feature>
<protein>
    <recommendedName>
        <fullName evidence="18">Tol-Pal system protein TolA</fullName>
    </recommendedName>
</protein>
<evidence type="ECO:0000255" key="1"/>
<evidence type="ECO:0000256" key="2">
    <source>
        <dbReference type="SAM" id="MobiDB-lite"/>
    </source>
</evidence>
<evidence type="ECO:0000269" key="3">
    <source>
    </source>
</evidence>
<evidence type="ECO:0000269" key="4">
    <source>
    </source>
</evidence>
<evidence type="ECO:0000269" key="5">
    <source>
    </source>
</evidence>
<evidence type="ECO:0000269" key="6">
    <source>
    </source>
</evidence>
<evidence type="ECO:0000269" key="7">
    <source>
    </source>
</evidence>
<evidence type="ECO:0000269" key="8">
    <source>
    </source>
</evidence>
<evidence type="ECO:0000269" key="9">
    <source>
    </source>
</evidence>
<evidence type="ECO:0000269" key="10">
    <source>
    </source>
</evidence>
<evidence type="ECO:0000269" key="11">
    <source>
    </source>
</evidence>
<evidence type="ECO:0000269" key="12">
    <source>
    </source>
</evidence>
<evidence type="ECO:0000269" key="13">
    <source>
    </source>
</evidence>
<evidence type="ECO:0000269" key="14">
    <source>
    </source>
</evidence>
<evidence type="ECO:0000269" key="15">
    <source>
    </source>
</evidence>
<evidence type="ECO:0000269" key="16">
    <source>
    </source>
</evidence>
<evidence type="ECO:0000303" key="17">
    <source>
    </source>
</evidence>
<evidence type="ECO:0000305" key="18"/>
<evidence type="ECO:0000305" key="19">
    <source>
    </source>
</evidence>
<evidence type="ECO:0000305" key="20">
    <source>
    </source>
</evidence>
<evidence type="ECO:0000305" key="21">
    <source>
    </source>
</evidence>
<evidence type="ECO:0007744" key="22">
    <source>
        <dbReference type="PDB" id="1S62"/>
    </source>
</evidence>
<evidence type="ECO:0007744" key="23">
    <source>
        <dbReference type="PDB" id="1TOL"/>
    </source>
</evidence>
<evidence type="ECO:0007744" key="24">
    <source>
        <dbReference type="PDB" id="3QDP"/>
    </source>
</evidence>
<evidence type="ECO:0007744" key="25">
    <source>
        <dbReference type="PDB" id="3QDR"/>
    </source>
</evidence>
<evidence type="ECO:0007829" key="26">
    <source>
        <dbReference type="PDB" id="1S62"/>
    </source>
</evidence>
<evidence type="ECO:0007829" key="27">
    <source>
        <dbReference type="PDB" id="1TOL"/>
    </source>
</evidence>
<keyword id="KW-0002">3D-structure</keyword>
<keyword id="KW-0131">Cell cycle</keyword>
<keyword id="KW-0132">Cell division</keyword>
<keyword id="KW-0997">Cell inner membrane</keyword>
<keyword id="KW-1003">Cell membrane</keyword>
<keyword id="KW-1015">Disulfide bond</keyword>
<keyword id="KW-0472">Membrane</keyword>
<keyword id="KW-1185">Reference proteome</keyword>
<keyword id="KW-0677">Repeat</keyword>
<keyword id="KW-0812">Transmembrane</keyword>
<keyword id="KW-1133">Transmembrane helix</keyword>
<accession>P19934</accession>
<sequence length="421" mass="43157">MSKATEQNDKLKRAIIISAVLHVILFAALIWSSFDENIEASAGGGGGSSIDAVMVDSGAVVEQYKRMQSQESSAKRSDEQRKMKEQQAAEELREKQAAEQERLKQLEKERLAAQEQKKQAEEAAKQAELKQKQAEEAAAKAAADAKAKAEADAKAAEEAAKKAAADAKKKAEAEAAKAAAEAQKKAEAAAAALKKKAEAAEAAAAEARKKAATEAAEKAKAEAEKKAAAEKAAADKKAAAEKAAADKKAAEKAAAEKAAADKKAAAEKAAADKKAAAAKAAAEKAAAAKAAAEADDIFGELSSGKNAPKTGGGAKGNNASPAGSGNTKNNGASGADINNYAGQIKSAIESKFYDASSYAGKTCTLRIKLAPDGMLLDIKPEGGDPALCQAALAAAKLAKIPKPPSQAVYEVFKNAPLDFKP</sequence>
<dbReference type="EMBL" id="M28232">
    <property type="protein sequence ID" value="AAA24683.1"/>
    <property type="molecule type" value="Genomic_DNA"/>
</dbReference>
<dbReference type="EMBL" id="U00096">
    <property type="protein sequence ID" value="AAC73833.1"/>
    <property type="molecule type" value="Genomic_DNA"/>
</dbReference>
<dbReference type="EMBL" id="AP009048">
    <property type="protein sequence ID" value="BAA35405.1"/>
    <property type="molecule type" value="Genomic_DNA"/>
</dbReference>
<dbReference type="PIR" id="JV0057">
    <property type="entry name" value="JV0057"/>
</dbReference>
<dbReference type="RefSeq" id="NP_415267.1">
    <property type="nucleotide sequence ID" value="NC_000913.3"/>
</dbReference>
<dbReference type="RefSeq" id="WP_000030637.1">
    <property type="nucleotide sequence ID" value="NZ_STEB01000035.1"/>
</dbReference>
<dbReference type="PDB" id="1S62">
    <property type="method" value="NMR"/>
    <property type="chains" value="A=325-421"/>
</dbReference>
<dbReference type="PDB" id="1TOL">
    <property type="method" value="X-ray"/>
    <property type="resolution" value="1.85 A"/>
    <property type="chains" value="A=295-421"/>
</dbReference>
<dbReference type="PDB" id="3QDP">
    <property type="method" value="X-ray"/>
    <property type="resolution" value="2.15 A"/>
    <property type="chains" value="A=302-421"/>
</dbReference>
<dbReference type="PDB" id="3QDR">
    <property type="method" value="X-ray"/>
    <property type="resolution" value="2.65 A"/>
    <property type="chains" value="A=302-421"/>
</dbReference>
<dbReference type="PDBsum" id="1S62"/>
<dbReference type="PDBsum" id="1TOL"/>
<dbReference type="PDBsum" id="3QDP"/>
<dbReference type="PDBsum" id="3QDR"/>
<dbReference type="SMR" id="P19934"/>
<dbReference type="BioGRID" id="4261827">
    <property type="interactions" value="184"/>
</dbReference>
<dbReference type="ComplexPortal" id="CPX-5782">
    <property type="entry name" value="Tol-Pal cell envelope complex"/>
</dbReference>
<dbReference type="DIP" id="DIP-11005N"/>
<dbReference type="FunCoup" id="P19934">
    <property type="interactions" value="66"/>
</dbReference>
<dbReference type="IntAct" id="P19934">
    <property type="interactions" value="10"/>
</dbReference>
<dbReference type="MINT" id="P19934"/>
<dbReference type="STRING" id="511145.b0739"/>
<dbReference type="TCDB" id="2.C.1.2.1">
    <property type="family name" value="the tonb-exbb-exbd/tola-tolq-tolr outer membrane receptor energizers and stabilizers (tonb/tola) family"/>
</dbReference>
<dbReference type="jPOST" id="P19934"/>
<dbReference type="PaxDb" id="511145-b0739"/>
<dbReference type="EnsemblBacteria" id="AAC73833">
    <property type="protein sequence ID" value="AAC73833"/>
    <property type="gene ID" value="b0739"/>
</dbReference>
<dbReference type="GeneID" id="946625"/>
<dbReference type="KEGG" id="ecj:JW0729"/>
<dbReference type="KEGG" id="eco:b0739"/>
<dbReference type="KEGG" id="ecoc:C3026_03710"/>
<dbReference type="PATRIC" id="fig|511145.12.peg.771"/>
<dbReference type="EchoBASE" id="EB1000"/>
<dbReference type="eggNOG" id="COG3064">
    <property type="taxonomic scope" value="Bacteria"/>
</dbReference>
<dbReference type="HOGENOM" id="CLU_035992_0_0_6"/>
<dbReference type="InParanoid" id="P19934"/>
<dbReference type="OMA" id="AIGRNWI"/>
<dbReference type="OrthoDB" id="7068768at2"/>
<dbReference type="PhylomeDB" id="P19934"/>
<dbReference type="BioCyc" id="EcoCyc:EG11007-MONOMER"/>
<dbReference type="EvolutionaryTrace" id="P19934"/>
<dbReference type="PRO" id="PR:P19934"/>
<dbReference type="Proteomes" id="UP000000625">
    <property type="component" value="Chromosome"/>
</dbReference>
<dbReference type="GO" id="GO:0032153">
    <property type="term" value="C:cell division site"/>
    <property type="evidence" value="ECO:0000314"/>
    <property type="project" value="EcoCyc"/>
</dbReference>
<dbReference type="GO" id="GO:0016020">
    <property type="term" value="C:membrane"/>
    <property type="evidence" value="ECO:0000303"/>
    <property type="project" value="ComplexPortal"/>
</dbReference>
<dbReference type="GO" id="GO:0005886">
    <property type="term" value="C:plasma membrane"/>
    <property type="evidence" value="ECO:0000314"/>
    <property type="project" value="EcoCyc"/>
</dbReference>
<dbReference type="GO" id="GO:0097718">
    <property type="term" value="F:disordered domain specific binding"/>
    <property type="evidence" value="ECO:0000353"/>
    <property type="project" value="CAFA"/>
</dbReference>
<dbReference type="GO" id="GO:0019904">
    <property type="term" value="F:protein domain specific binding"/>
    <property type="evidence" value="ECO:0000353"/>
    <property type="project" value="CAFA"/>
</dbReference>
<dbReference type="GO" id="GO:0019534">
    <property type="term" value="F:toxin transmembrane transporter activity"/>
    <property type="evidence" value="ECO:0007669"/>
    <property type="project" value="InterPro"/>
</dbReference>
<dbReference type="GO" id="GO:0046790">
    <property type="term" value="F:virion binding"/>
    <property type="evidence" value="ECO:0000314"/>
    <property type="project" value="CAFA"/>
</dbReference>
<dbReference type="GO" id="GO:0043213">
    <property type="term" value="P:bacteriocin transport"/>
    <property type="evidence" value="ECO:0000315"/>
    <property type="project" value="EcoliWiki"/>
</dbReference>
<dbReference type="GO" id="GO:0051301">
    <property type="term" value="P:cell division"/>
    <property type="evidence" value="ECO:0000314"/>
    <property type="project" value="EcoCyc"/>
</dbReference>
<dbReference type="GO" id="GO:0090529">
    <property type="term" value="P:cell septum assembly"/>
    <property type="evidence" value="ECO:0000269"/>
    <property type="project" value="EcoCyc"/>
</dbReference>
<dbReference type="GO" id="GO:0071237">
    <property type="term" value="P:cellular response to bacteriocin"/>
    <property type="evidence" value="ECO:0000315"/>
    <property type="project" value="EcoCyc"/>
</dbReference>
<dbReference type="GO" id="GO:0017038">
    <property type="term" value="P:protein import"/>
    <property type="evidence" value="ECO:0000315"/>
    <property type="project" value="EcoliWiki"/>
</dbReference>
<dbReference type="GO" id="GO:1905153">
    <property type="term" value="P:regulation of membrane invagination"/>
    <property type="evidence" value="ECO:0000303"/>
    <property type="project" value="ComplexPortal"/>
</dbReference>
<dbReference type="GO" id="GO:0046718">
    <property type="term" value="P:symbiont entry into host cell"/>
    <property type="evidence" value="ECO:0000314"/>
    <property type="project" value="EcoCyc"/>
</dbReference>
<dbReference type="FunFam" id="3.30.1150.10:FF:000001">
    <property type="entry name" value="Cell envelope integrity protein TolA"/>
    <property type="match status" value="1"/>
</dbReference>
<dbReference type="Gene3D" id="3.30.1150.10">
    <property type="match status" value="1"/>
</dbReference>
<dbReference type="InterPro" id="IPR014161">
    <property type="entry name" value="Tol-Pal_TolA"/>
</dbReference>
<dbReference type="NCBIfam" id="NF007065">
    <property type="entry name" value="PRK09510.1"/>
    <property type="match status" value="2"/>
</dbReference>
<dbReference type="NCBIfam" id="TIGR02794">
    <property type="entry name" value="tolA_full"/>
    <property type="match status" value="2"/>
</dbReference>
<dbReference type="Pfam" id="PF06519">
    <property type="entry name" value="TolA"/>
    <property type="match status" value="1"/>
</dbReference>
<dbReference type="SUPFAM" id="SSF74653">
    <property type="entry name" value="TolA/TonB C-terminal domain"/>
    <property type="match status" value="1"/>
</dbReference>